<accession>A5A8K9</accession>
<reference key="1">
    <citation type="submission" date="2007-05" db="EMBL/GenBank/DDBJ databases">
        <title>psbA genes in Acaryochloris marina.</title>
        <authorList>
            <person name="Uzumaki T."/>
            <person name="Itoh S."/>
        </authorList>
    </citation>
    <scope>NUCLEOTIDE SEQUENCE [GENOMIC DNA]</scope>
</reference>
<reference key="2">
    <citation type="journal article" date="2008" name="Proc. Natl. Acad. Sci. U.S.A.">
        <title>Niche adaptation and genome expansion in the chlorophyll d-producing cyanobacterium Acaryochloris marina.</title>
        <authorList>
            <person name="Swingley W.D."/>
            <person name="Chen M."/>
            <person name="Cheung P.C."/>
            <person name="Conrad A.L."/>
            <person name="Dejesa L.C."/>
            <person name="Hao J."/>
            <person name="Honchak B.M."/>
            <person name="Karbach L.E."/>
            <person name="Kurdoglu A."/>
            <person name="Lahiri S."/>
            <person name="Mastrian S.D."/>
            <person name="Miyashita H."/>
            <person name="Page L."/>
            <person name="Ramakrishna P."/>
            <person name="Satoh S."/>
            <person name="Sattley W.M."/>
            <person name="Shimada Y."/>
            <person name="Taylor H.L."/>
            <person name="Tomo T."/>
            <person name="Tsuchiya T."/>
            <person name="Wang Z.T."/>
            <person name="Raymond J."/>
            <person name="Mimuro M."/>
            <person name="Blankenship R.E."/>
            <person name="Touchman J.W."/>
        </authorList>
    </citation>
    <scope>NUCLEOTIDE SEQUENCE [LARGE SCALE GENOMIC DNA]</scope>
    <source>
        <strain>MBIC 11017</strain>
    </source>
</reference>
<proteinExistence type="evidence at protein level"/>
<name>PSBA2_ACAM1</name>
<evidence type="ECO:0000255" key="1">
    <source>
        <dbReference type="HAMAP-Rule" id="MF_01379"/>
    </source>
</evidence>
<evidence type="ECO:0000305" key="2"/>
<evidence type="ECO:0007829" key="3">
    <source>
        <dbReference type="PDB" id="7YMI"/>
    </source>
</evidence>
<gene>
    <name evidence="2" type="primary">psbA2</name>
    <name type="ordered locus">AM1_2166</name>
</gene>
<gene>
    <name evidence="2" type="primary">psbA3</name>
    <name type="ordered locus">AM1_2889</name>
</gene>
<feature type="chain" id="PRO_0000339921" description="Photosystem II protein D1 2">
    <location>
        <begin position="1"/>
        <end position="344"/>
    </location>
</feature>
<feature type="propeptide" id="PRO_0000431677" evidence="1">
    <location>
        <begin position="345"/>
        <end position="360"/>
    </location>
</feature>
<feature type="transmembrane region" description="Helical" evidence="1">
    <location>
        <begin position="29"/>
        <end position="46"/>
    </location>
</feature>
<feature type="transmembrane region" description="Helical" evidence="1">
    <location>
        <begin position="118"/>
        <end position="133"/>
    </location>
</feature>
<feature type="transmembrane region" description="Helical" evidence="1">
    <location>
        <begin position="142"/>
        <end position="156"/>
    </location>
</feature>
<feature type="transmembrane region" description="Helical" evidence="1">
    <location>
        <begin position="197"/>
        <end position="218"/>
    </location>
</feature>
<feature type="transmembrane region" description="Helical" evidence="1">
    <location>
        <begin position="274"/>
        <end position="288"/>
    </location>
</feature>
<feature type="binding site" description="axial binding residue" evidence="1">
    <location>
        <position position="118"/>
    </location>
    <ligand>
        <name>chlorophyll a</name>
        <dbReference type="ChEBI" id="CHEBI:58416"/>
        <label>ChlzD1</label>
    </ligand>
    <ligandPart>
        <name>Mg</name>
        <dbReference type="ChEBI" id="CHEBI:25107"/>
    </ligandPart>
</feature>
<feature type="binding site" evidence="1">
    <location>
        <position position="126"/>
    </location>
    <ligand>
        <name>pheophytin a</name>
        <dbReference type="ChEBI" id="CHEBI:136840"/>
        <label>D1</label>
    </ligand>
</feature>
<feature type="binding site" evidence="1">
    <location>
        <position position="170"/>
    </location>
    <ligand>
        <name>[CaMn4O5] cluster</name>
        <dbReference type="ChEBI" id="CHEBI:189552"/>
    </ligand>
</feature>
<feature type="binding site" evidence="1">
    <location>
        <position position="189"/>
    </location>
    <ligand>
        <name>[CaMn4O5] cluster</name>
        <dbReference type="ChEBI" id="CHEBI:189552"/>
    </ligand>
</feature>
<feature type="binding site" description="axial binding residue" evidence="1">
    <location>
        <position position="198"/>
    </location>
    <ligand>
        <name>chlorophyll a</name>
        <dbReference type="ChEBI" id="CHEBI:58416"/>
        <label>PD1</label>
    </ligand>
    <ligandPart>
        <name>Mg</name>
        <dbReference type="ChEBI" id="CHEBI:25107"/>
    </ligandPart>
</feature>
<feature type="binding site" evidence="1">
    <location>
        <position position="215"/>
    </location>
    <ligand>
        <name>a quinone</name>
        <dbReference type="ChEBI" id="CHEBI:132124"/>
        <label>B</label>
    </ligand>
</feature>
<feature type="binding site" evidence="1">
    <location>
        <position position="215"/>
    </location>
    <ligand>
        <name>Fe cation</name>
        <dbReference type="ChEBI" id="CHEBI:24875"/>
        <note>ligand shared with heterodimeric partner</note>
    </ligand>
</feature>
<feature type="binding site" evidence="1">
    <location>
        <begin position="264"/>
        <end position="265"/>
    </location>
    <ligand>
        <name>a quinone</name>
        <dbReference type="ChEBI" id="CHEBI:132124"/>
        <label>B</label>
    </ligand>
</feature>
<feature type="binding site" evidence="1">
    <location>
        <position position="272"/>
    </location>
    <ligand>
        <name>Fe cation</name>
        <dbReference type="ChEBI" id="CHEBI:24875"/>
        <note>ligand shared with heterodimeric partner</note>
    </ligand>
</feature>
<feature type="binding site" evidence="1">
    <location>
        <position position="332"/>
    </location>
    <ligand>
        <name>[CaMn4O5] cluster</name>
        <dbReference type="ChEBI" id="CHEBI:189552"/>
    </ligand>
</feature>
<feature type="binding site" evidence="1">
    <location>
        <position position="333"/>
    </location>
    <ligand>
        <name>[CaMn4O5] cluster</name>
        <dbReference type="ChEBI" id="CHEBI:189552"/>
    </ligand>
</feature>
<feature type="binding site" evidence="1">
    <location>
        <position position="342"/>
    </location>
    <ligand>
        <name>[CaMn4O5] cluster</name>
        <dbReference type="ChEBI" id="CHEBI:189552"/>
    </ligand>
</feature>
<feature type="binding site" evidence="1">
    <location>
        <position position="344"/>
    </location>
    <ligand>
        <name>[CaMn4O5] cluster</name>
        <dbReference type="ChEBI" id="CHEBI:189552"/>
    </ligand>
</feature>
<feature type="site" description="Tyrosine radical intermediate" evidence="1">
    <location>
        <position position="161"/>
    </location>
</feature>
<feature type="site" description="Stabilizes free radical intermediate" evidence="1">
    <location>
        <position position="190"/>
    </location>
</feature>
<feature type="site" description="Cleavage; by CtpA" evidence="1">
    <location>
        <begin position="344"/>
        <end position="345"/>
    </location>
</feature>
<feature type="helix" evidence="3">
    <location>
        <begin position="13"/>
        <end position="21"/>
    </location>
</feature>
<feature type="strand" evidence="3">
    <location>
        <begin position="26"/>
        <end position="28"/>
    </location>
</feature>
<feature type="helix" evidence="3">
    <location>
        <begin position="31"/>
        <end position="53"/>
    </location>
</feature>
<feature type="strand" evidence="3">
    <location>
        <begin position="62"/>
        <end position="64"/>
    </location>
</feature>
<feature type="turn" evidence="3">
    <location>
        <begin position="71"/>
        <end position="74"/>
    </location>
</feature>
<feature type="turn" evidence="3">
    <location>
        <begin position="77"/>
        <end position="79"/>
    </location>
</feature>
<feature type="turn" evidence="3">
    <location>
        <begin position="87"/>
        <end position="91"/>
    </location>
</feature>
<feature type="helix" evidence="3">
    <location>
        <begin position="96"/>
        <end position="98"/>
    </location>
</feature>
<feature type="helix" evidence="3">
    <location>
        <begin position="102"/>
        <end position="107"/>
    </location>
</feature>
<feature type="helix" evidence="3">
    <location>
        <begin position="110"/>
        <end position="137"/>
    </location>
</feature>
<feature type="helix" evidence="3">
    <location>
        <begin position="143"/>
        <end position="158"/>
    </location>
</feature>
<feature type="helix" evidence="3">
    <location>
        <begin position="160"/>
        <end position="165"/>
    </location>
</feature>
<feature type="helix" evidence="3">
    <location>
        <begin position="168"/>
        <end position="170"/>
    </location>
</feature>
<feature type="helix" evidence="3">
    <location>
        <begin position="176"/>
        <end position="190"/>
    </location>
</feature>
<feature type="helix" evidence="3">
    <location>
        <begin position="192"/>
        <end position="194"/>
    </location>
</feature>
<feature type="helix" evidence="3">
    <location>
        <begin position="196"/>
        <end position="222"/>
    </location>
</feature>
<feature type="helix" evidence="3">
    <location>
        <begin position="268"/>
        <end position="293"/>
    </location>
</feature>
<feature type="turn" evidence="3">
    <location>
        <begin position="294"/>
        <end position="296"/>
    </location>
</feature>
<feature type="strand" evidence="3">
    <location>
        <begin position="309"/>
        <end position="311"/>
    </location>
</feature>
<feature type="helix" evidence="3">
    <location>
        <begin position="317"/>
        <end position="331"/>
    </location>
</feature>
<protein>
    <recommendedName>
        <fullName evidence="1">Photosystem II protein D1 2</fullName>
        <shortName evidence="1">PSII D1 protein 2</shortName>
        <ecNumber evidence="1">1.10.3.9</ecNumber>
    </recommendedName>
    <alternativeName>
        <fullName evidence="1">Photosystem II Q(B) protein 2</fullName>
    </alternativeName>
</protein>
<organism>
    <name type="scientific">Acaryochloris marina (strain MBIC 11017)</name>
    <dbReference type="NCBI Taxonomy" id="329726"/>
    <lineage>
        <taxon>Bacteria</taxon>
        <taxon>Bacillati</taxon>
        <taxon>Cyanobacteriota</taxon>
        <taxon>Cyanophyceae</taxon>
        <taxon>Acaryochloridales</taxon>
        <taxon>Acaryochloridaceae</taxon>
        <taxon>Acaryochloris</taxon>
    </lineage>
</organism>
<dbReference type="EC" id="1.10.3.9" evidence="1"/>
<dbReference type="EMBL" id="CP000828">
    <property type="protein sequence ID" value="ABW27180.1"/>
    <property type="molecule type" value="Genomic_DNA"/>
</dbReference>
<dbReference type="EMBL" id="CP000828">
    <property type="protein sequence ID" value="ABW27888.1"/>
    <property type="molecule type" value="Genomic_DNA"/>
</dbReference>
<dbReference type="EMBL" id="AB303650">
    <property type="protein sequence ID" value="BAF62343.1"/>
    <property type="molecule type" value="Genomic_DNA"/>
</dbReference>
<dbReference type="EMBL" id="AB303650">
    <property type="protein sequence ID" value="BAF62344.1"/>
    <property type="molecule type" value="Genomic_DNA"/>
</dbReference>
<dbReference type="PDB" id="7YMI">
    <property type="method" value="EM"/>
    <property type="resolution" value="3.30 A"/>
    <property type="chains" value="A/a=1-360"/>
</dbReference>
<dbReference type="PDB" id="7YMM">
    <property type="method" value="EM"/>
    <property type="resolution" value="3.60 A"/>
    <property type="chains" value="1A/2A/3A/4A=1-360"/>
</dbReference>
<dbReference type="PDBsum" id="7YMI"/>
<dbReference type="PDBsum" id="7YMM"/>
<dbReference type="EMDB" id="EMD-33929"/>
<dbReference type="EMDB" id="EMD-33933"/>
<dbReference type="SMR" id="A5A8K9"/>
<dbReference type="STRING" id="329726.AM1_2166"/>
<dbReference type="KEGG" id="amr:AM1_2166"/>
<dbReference type="KEGG" id="amr:AM1_2889"/>
<dbReference type="eggNOG" id="ENOG502Z87P">
    <property type="taxonomic scope" value="Bacteria"/>
</dbReference>
<dbReference type="HOGENOM" id="CLU_054206_1_0_3"/>
<dbReference type="OrthoDB" id="505356at2"/>
<dbReference type="Proteomes" id="UP000000268">
    <property type="component" value="Chromosome"/>
</dbReference>
<dbReference type="GO" id="GO:0009523">
    <property type="term" value="C:photosystem II"/>
    <property type="evidence" value="ECO:0007669"/>
    <property type="project" value="UniProtKB-KW"/>
</dbReference>
<dbReference type="GO" id="GO:0031676">
    <property type="term" value="C:plasma membrane-derived thylakoid membrane"/>
    <property type="evidence" value="ECO:0007669"/>
    <property type="project" value="UniProtKB-SubCell"/>
</dbReference>
<dbReference type="GO" id="GO:0016168">
    <property type="term" value="F:chlorophyll binding"/>
    <property type="evidence" value="ECO:0007669"/>
    <property type="project" value="UniProtKB-UniRule"/>
</dbReference>
<dbReference type="GO" id="GO:0045156">
    <property type="term" value="F:electron transporter, transferring electrons within the cyclic electron transport pathway of photosynthesis activity"/>
    <property type="evidence" value="ECO:0007669"/>
    <property type="project" value="InterPro"/>
</dbReference>
<dbReference type="GO" id="GO:0005506">
    <property type="term" value="F:iron ion binding"/>
    <property type="evidence" value="ECO:0007669"/>
    <property type="project" value="UniProtKB-UniRule"/>
</dbReference>
<dbReference type="GO" id="GO:0016682">
    <property type="term" value="F:oxidoreductase activity, acting on diphenols and related substances as donors, oxygen as acceptor"/>
    <property type="evidence" value="ECO:0007669"/>
    <property type="project" value="UniProtKB-UniRule"/>
</dbReference>
<dbReference type="GO" id="GO:0010242">
    <property type="term" value="F:oxygen evolving activity"/>
    <property type="evidence" value="ECO:0007669"/>
    <property type="project" value="UniProtKB-EC"/>
</dbReference>
<dbReference type="GO" id="GO:0009772">
    <property type="term" value="P:photosynthetic electron transport in photosystem II"/>
    <property type="evidence" value="ECO:0007669"/>
    <property type="project" value="InterPro"/>
</dbReference>
<dbReference type="GO" id="GO:0009635">
    <property type="term" value="P:response to herbicide"/>
    <property type="evidence" value="ECO:0007669"/>
    <property type="project" value="UniProtKB-KW"/>
</dbReference>
<dbReference type="FunFam" id="1.20.85.10:FF:000002">
    <property type="entry name" value="Photosystem II protein D1"/>
    <property type="match status" value="1"/>
</dbReference>
<dbReference type="Gene3D" id="1.20.85.10">
    <property type="entry name" value="Photosystem II protein D1-like"/>
    <property type="match status" value="1"/>
</dbReference>
<dbReference type="HAMAP" id="MF_01379">
    <property type="entry name" value="PSII_PsbA_D1"/>
    <property type="match status" value="1"/>
</dbReference>
<dbReference type="InterPro" id="IPR055266">
    <property type="entry name" value="D1/D2"/>
</dbReference>
<dbReference type="InterPro" id="IPR036854">
    <property type="entry name" value="Photo_II_D1/D2_sf"/>
</dbReference>
<dbReference type="InterPro" id="IPR000484">
    <property type="entry name" value="Photo_RC_L/M"/>
</dbReference>
<dbReference type="InterPro" id="IPR055265">
    <property type="entry name" value="Photo_RC_L/M_CS"/>
</dbReference>
<dbReference type="InterPro" id="IPR005867">
    <property type="entry name" value="PSII_D1"/>
</dbReference>
<dbReference type="NCBIfam" id="TIGR01151">
    <property type="entry name" value="psbA"/>
    <property type="match status" value="1"/>
</dbReference>
<dbReference type="PANTHER" id="PTHR33149:SF12">
    <property type="entry name" value="PHOTOSYSTEM II D2 PROTEIN"/>
    <property type="match status" value="1"/>
</dbReference>
<dbReference type="PANTHER" id="PTHR33149">
    <property type="entry name" value="PHOTOSYSTEM II PROTEIN D1"/>
    <property type="match status" value="1"/>
</dbReference>
<dbReference type="Pfam" id="PF00124">
    <property type="entry name" value="Photo_RC"/>
    <property type="match status" value="1"/>
</dbReference>
<dbReference type="SUPFAM" id="SSF81483">
    <property type="entry name" value="Bacterial photosystem II reaction centre, L and M subunits"/>
    <property type="match status" value="1"/>
</dbReference>
<dbReference type="PROSITE" id="PS00244">
    <property type="entry name" value="REACTION_CENTER"/>
    <property type="match status" value="1"/>
</dbReference>
<sequence>MTTVLQRRESASAWERFCSFITSTNNRLYIGWFGVLMIPTLLTAVTCFVIAFIGAPPVDIDGIREPVAGSLLYGNNIITGAVVPSSNAIGLHLYPIWEAASLDEWLYNGGPYQLIIFHYMIGCICYLGRQWEYSYRLGMRPWICVAYSAPLAATYSVFLIYPLGQGSFSDGMPLGISGTFNFMFVFQAEHNILMHPFHMFGVAGVLGGSLFAAMHGSLVSSTLVRETTEGESANYGYKFGQEEETYNIVAAHGYFGRLIFQYASFSNSRSLHFFLGAWPVVCIWLTAMGISTMAFNLNGFNFNHSIVDSQGNVVNTWADVLNRANLGFEVMHERNAHNFPLDLAAGESAPVALTAPVING</sequence>
<comment type="function">
    <text evidence="1">Photosystem II (PSII) is a light-driven water:plastoquinone oxidoreductase that uses light energy to abstract electrons from H(2)O, generating O(2) and a proton gradient subsequently used for ATP formation. It consists of a core antenna complex that captures photons, and an electron transfer chain that converts photonic excitation into a charge separation. The D1/D2 (PsbA/PsbD) reaction center heterodimer binds P680, the primary electron donor of PSII as well as several subsequent electron acceptors.</text>
</comment>
<comment type="catalytic activity">
    <reaction evidence="1">
        <text>2 a plastoquinone + 4 hnu + 2 H2O = 2 a plastoquinol + O2</text>
        <dbReference type="Rhea" id="RHEA:36359"/>
        <dbReference type="Rhea" id="RHEA-COMP:9561"/>
        <dbReference type="Rhea" id="RHEA-COMP:9562"/>
        <dbReference type="ChEBI" id="CHEBI:15377"/>
        <dbReference type="ChEBI" id="CHEBI:15379"/>
        <dbReference type="ChEBI" id="CHEBI:17757"/>
        <dbReference type="ChEBI" id="CHEBI:30212"/>
        <dbReference type="ChEBI" id="CHEBI:62192"/>
        <dbReference type="EC" id="1.10.3.9"/>
    </reaction>
</comment>
<comment type="cofactor">
    <text evidence="1">The D1/D2 heterodimer binds P680, chlorophylls that are the primary electron donor of PSII, and subsequent electron acceptors. It shares a non-heme iron and each subunit binds pheophytin, quinone, additional chlorophylls, carotenoids and lipids. D1 provides most of the ligands for the Mn4-Ca-O5 cluster of the oxygen-evolving complex (OEC). There is also a Cl(-1) ion associated with D1 and D2, which is required for oxygen evolution. The PSII complex binds additional chlorophylls, carotenoids and specific lipids.</text>
</comment>
<comment type="subunit">
    <text evidence="1">PSII is composed of 1 copy each of membrane proteins PsbA, PsbB, PsbC, PsbD, PsbE, PsbF, PsbH, PsbI, PsbJ, PsbK, PsbL, PsbM, PsbT, PsbX, PsbY, PsbZ, Psb30/Ycf12, peripheral proteins PsbO, CyanoQ (PsbQ), PsbU, PsbV and a large number of cofactors. It forms dimeric complexes.</text>
</comment>
<comment type="subcellular location">
    <subcellularLocation>
        <location evidence="1">Cellular thylakoid membrane</location>
        <topology evidence="1">Multi-pass membrane protein</topology>
    </subcellularLocation>
</comment>
<comment type="PTM">
    <text evidence="1">Tyr-161 forms a radical intermediate that is referred to as redox-active TyrZ, YZ or Y-Z.</text>
</comment>
<comment type="PTM">
    <text evidence="1">C-terminally processed by CtpA; processing is essential to allow assembly of the oxygen-evolving complex and thus photosynthetic growth.</text>
</comment>
<comment type="miscellaneous">
    <text evidence="1">Cyanobacteria usually contain more than 2 copies of the psbA gene.</text>
</comment>
<comment type="miscellaneous">
    <text evidence="1">2 of the reaction center chlorophylls (ChlD1 and ChlD2) are entirely coordinated by water.</text>
</comment>
<comment type="miscellaneous">
    <text evidence="1">Herbicides such as atrazine, BNT, diuron or ioxynil bind in the Q(B) binding site and block subsequent electron transfer.</text>
</comment>
<comment type="similarity">
    <text evidence="1">Belongs to the reaction center PufL/M/PsbA/D family.</text>
</comment>
<keyword id="KW-0002">3D-structure</keyword>
<keyword id="KW-0106">Calcium</keyword>
<keyword id="KW-0148">Chlorophyll</keyword>
<keyword id="KW-0157">Chromophore</keyword>
<keyword id="KW-0249">Electron transport</keyword>
<keyword id="KW-0359">Herbicide resistance</keyword>
<keyword id="KW-0408">Iron</keyword>
<keyword id="KW-0460">Magnesium</keyword>
<keyword id="KW-0464">Manganese</keyword>
<keyword id="KW-0472">Membrane</keyword>
<keyword id="KW-0479">Metal-binding</keyword>
<keyword id="KW-0560">Oxidoreductase</keyword>
<keyword id="KW-0602">Photosynthesis</keyword>
<keyword id="KW-0604">Photosystem II</keyword>
<keyword id="KW-1185">Reference proteome</keyword>
<keyword id="KW-0793">Thylakoid</keyword>
<keyword id="KW-0812">Transmembrane</keyword>
<keyword id="KW-1133">Transmembrane helix</keyword>
<keyword id="KW-0813">Transport</keyword>